<proteinExistence type="inferred from homology"/>
<accession>B5QUS3</accession>
<protein>
    <recommendedName>
        <fullName evidence="1">ATP synthase epsilon chain</fullName>
    </recommendedName>
    <alternativeName>
        <fullName evidence="1">ATP synthase F1 sector epsilon subunit</fullName>
    </alternativeName>
    <alternativeName>
        <fullName evidence="1">F-ATPase epsilon subunit</fullName>
    </alternativeName>
</protein>
<dbReference type="EMBL" id="AM933172">
    <property type="protein sequence ID" value="CAR35254.1"/>
    <property type="molecule type" value="Genomic_DNA"/>
</dbReference>
<dbReference type="RefSeq" id="WP_001251971.1">
    <property type="nucleotide sequence ID" value="NC_011294.1"/>
</dbReference>
<dbReference type="SMR" id="B5QUS3"/>
<dbReference type="KEGG" id="set:SEN3678"/>
<dbReference type="HOGENOM" id="CLU_084338_2_0_6"/>
<dbReference type="Proteomes" id="UP000000613">
    <property type="component" value="Chromosome"/>
</dbReference>
<dbReference type="GO" id="GO:0005886">
    <property type="term" value="C:plasma membrane"/>
    <property type="evidence" value="ECO:0007669"/>
    <property type="project" value="UniProtKB-SubCell"/>
</dbReference>
<dbReference type="GO" id="GO:0045259">
    <property type="term" value="C:proton-transporting ATP synthase complex"/>
    <property type="evidence" value="ECO:0007669"/>
    <property type="project" value="UniProtKB-KW"/>
</dbReference>
<dbReference type="GO" id="GO:0005524">
    <property type="term" value="F:ATP binding"/>
    <property type="evidence" value="ECO:0007669"/>
    <property type="project" value="UniProtKB-UniRule"/>
</dbReference>
<dbReference type="GO" id="GO:0046933">
    <property type="term" value="F:proton-transporting ATP synthase activity, rotational mechanism"/>
    <property type="evidence" value="ECO:0007669"/>
    <property type="project" value="UniProtKB-UniRule"/>
</dbReference>
<dbReference type="CDD" id="cd12152">
    <property type="entry name" value="F1-ATPase_delta"/>
    <property type="match status" value="1"/>
</dbReference>
<dbReference type="FunFam" id="1.20.5.440:FF:000001">
    <property type="entry name" value="ATP synthase epsilon chain"/>
    <property type="match status" value="1"/>
</dbReference>
<dbReference type="FunFam" id="2.60.15.10:FF:000001">
    <property type="entry name" value="ATP synthase epsilon chain"/>
    <property type="match status" value="1"/>
</dbReference>
<dbReference type="Gene3D" id="1.20.5.440">
    <property type="entry name" value="ATP synthase delta/epsilon subunit, C-terminal domain"/>
    <property type="match status" value="1"/>
</dbReference>
<dbReference type="Gene3D" id="2.60.15.10">
    <property type="entry name" value="F0F1 ATP synthase delta/epsilon subunit, N-terminal"/>
    <property type="match status" value="1"/>
</dbReference>
<dbReference type="HAMAP" id="MF_00530">
    <property type="entry name" value="ATP_synth_epsil_bac"/>
    <property type="match status" value="1"/>
</dbReference>
<dbReference type="InterPro" id="IPR036794">
    <property type="entry name" value="ATP_F1_dsu/esu_C_sf"/>
</dbReference>
<dbReference type="InterPro" id="IPR001469">
    <property type="entry name" value="ATP_synth_F1_dsu/esu"/>
</dbReference>
<dbReference type="InterPro" id="IPR020546">
    <property type="entry name" value="ATP_synth_F1_dsu/esu_N"/>
</dbReference>
<dbReference type="InterPro" id="IPR020547">
    <property type="entry name" value="ATP_synth_F1_esu_C"/>
</dbReference>
<dbReference type="InterPro" id="IPR036771">
    <property type="entry name" value="ATPsynth_dsu/esu_N"/>
</dbReference>
<dbReference type="NCBIfam" id="TIGR01216">
    <property type="entry name" value="ATP_synt_epsi"/>
    <property type="match status" value="1"/>
</dbReference>
<dbReference type="NCBIfam" id="NF001847">
    <property type="entry name" value="PRK00571.1-4"/>
    <property type="match status" value="1"/>
</dbReference>
<dbReference type="PANTHER" id="PTHR13822">
    <property type="entry name" value="ATP SYNTHASE DELTA/EPSILON CHAIN"/>
    <property type="match status" value="1"/>
</dbReference>
<dbReference type="PANTHER" id="PTHR13822:SF10">
    <property type="entry name" value="ATP SYNTHASE EPSILON CHAIN, CHLOROPLASTIC"/>
    <property type="match status" value="1"/>
</dbReference>
<dbReference type="Pfam" id="PF00401">
    <property type="entry name" value="ATP-synt_DE"/>
    <property type="match status" value="1"/>
</dbReference>
<dbReference type="Pfam" id="PF02823">
    <property type="entry name" value="ATP-synt_DE_N"/>
    <property type="match status" value="1"/>
</dbReference>
<dbReference type="SUPFAM" id="SSF46604">
    <property type="entry name" value="Epsilon subunit of F1F0-ATP synthase C-terminal domain"/>
    <property type="match status" value="1"/>
</dbReference>
<dbReference type="SUPFAM" id="SSF51344">
    <property type="entry name" value="Epsilon subunit of F1F0-ATP synthase N-terminal domain"/>
    <property type="match status" value="1"/>
</dbReference>
<comment type="function">
    <text evidence="1">Produces ATP from ADP in the presence of a proton gradient across the membrane.</text>
</comment>
<comment type="subunit">
    <text evidence="1">F-type ATPases have 2 components, CF(1) - the catalytic core - and CF(0) - the membrane proton channel. CF(1) has five subunits: alpha(3), beta(3), gamma(1), delta(1), epsilon(1). CF(0) has three main subunits: a, b and c.</text>
</comment>
<comment type="subcellular location">
    <subcellularLocation>
        <location evidence="1">Cell inner membrane</location>
        <topology evidence="1">Peripheral membrane protein</topology>
    </subcellularLocation>
</comment>
<comment type="similarity">
    <text evidence="1">Belongs to the ATPase epsilon chain family.</text>
</comment>
<name>ATPE_SALEP</name>
<evidence type="ECO:0000255" key="1">
    <source>
        <dbReference type="HAMAP-Rule" id="MF_00530"/>
    </source>
</evidence>
<organism>
    <name type="scientific">Salmonella enteritidis PT4 (strain P125109)</name>
    <dbReference type="NCBI Taxonomy" id="550537"/>
    <lineage>
        <taxon>Bacteria</taxon>
        <taxon>Pseudomonadati</taxon>
        <taxon>Pseudomonadota</taxon>
        <taxon>Gammaproteobacteria</taxon>
        <taxon>Enterobacterales</taxon>
        <taxon>Enterobacteriaceae</taxon>
        <taxon>Salmonella</taxon>
    </lineage>
</organism>
<keyword id="KW-0066">ATP synthesis</keyword>
<keyword id="KW-0997">Cell inner membrane</keyword>
<keyword id="KW-1003">Cell membrane</keyword>
<keyword id="KW-0139">CF(1)</keyword>
<keyword id="KW-0375">Hydrogen ion transport</keyword>
<keyword id="KW-0406">Ion transport</keyword>
<keyword id="KW-0472">Membrane</keyword>
<keyword id="KW-0813">Transport</keyword>
<reference key="1">
    <citation type="journal article" date="2008" name="Genome Res.">
        <title>Comparative genome analysis of Salmonella enteritidis PT4 and Salmonella gallinarum 287/91 provides insights into evolutionary and host adaptation pathways.</title>
        <authorList>
            <person name="Thomson N.R."/>
            <person name="Clayton D.J."/>
            <person name="Windhorst D."/>
            <person name="Vernikos G."/>
            <person name="Davidson S."/>
            <person name="Churcher C."/>
            <person name="Quail M.A."/>
            <person name="Stevens M."/>
            <person name="Jones M.A."/>
            <person name="Watson M."/>
            <person name="Barron A."/>
            <person name="Layton A."/>
            <person name="Pickard D."/>
            <person name="Kingsley R.A."/>
            <person name="Bignell A."/>
            <person name="Clark L."/>
            <person name="Harris B."/>
            <person name="Ormond D."/>
            <person name="Abdellah Z."/>
            <person name="Brooks K."/>
            <person name="Cherevach I."/>
            <person name="Chillingworth T."/>
            <person name="Woodward J."/>
            <person name="Norberczak H."/>
            <person name="Lord A."/>
            <person name="Arrowsmith C."/>
            <person name="Jagels K."/>
            <person name="Moule S."/>
            <person name="Mungall K."/>
            <person name="Saunders M."/>
            <person name="Whitehead S."/>
            <person name="Chabalgoity J.A."/>
            <person name="Maskell D."/>
            <person name="Humphreys T."/>
            <person name="Roberts M."/>
            <person name="Barrow P.A."/>
            <person name="Dougan G."/>
            <person name="Parkhill J."/>
        </authorList>
    </citation>
    <scope>NUCLEOTIDE SEQUENCE [LARGE SCALE GENOMIC DNA]</scope>
    <source>
        <strain>P125109</strain>
    </source>
</reference>
<gene>
    <name evidence="1" type="primary">atpC</name>
    <name type="ordered locus">SEN3678</name>
</gene>
<feature type="chain" id="PRO_1000127886" description="ATP synthase epsilon chain">
    <location>
        <begin position="1"/>
        <end position="139"/>
    </location>
</feature>
<sequence length="139" mass="15064">MAMTYHLDVVSAEQQMFSGLVEKIQVTGSEGELGIYPGHAPLLTAIKPGMIRIVKQHGHEEFIYLSGGILEVQPGSVTVLADTAIRGQDLDEARALEAKRKAEEHIKSSHGDVDYAQASAELAKAIAKLRVIELTKKAM</sequence>